<proteinExistence type="evidence at protein level"/>
<comment type="function">
    <text evidence="3 4">Aldehyde reductase that catalyzes the reduction of the aldehyde carbonyl groups on saturated and alpha,beta-unsaturated aldehydes with more than 5 carbons (PubMed:21169366). Involved in basal resistance against pathogens.</text>
</comment>
<comment type="catalytic activity">
    <reaction evidence="3">
        <text>(+)-neomenthol + NADP(+) = (1R,4S)-menthone + NADPH + H(+)</text>
        <dbReference type="Rhea" id="RHEA:23812"/>
        <dbReference type="ChEBI" id="CHEBI:15378"/>
        <dbReference type="ChEBI" id="CHEBI:15402"/>
        <dbReference type="ChEBI" id="CHEBI:15410"/>
        <dbReference type="ChEBI" id="CHEBI:57783"/>
        <dbReference type="ChEBI" id="CHEBI:58349"/>
        <dbReference type="EC" id="1.1.1.208"/>
    </reaction>
</comment>
<comment type="biophysicochemical properties">
    <kinetics>
        <KM evidence="4">0.07 mM for (E)-2-pentenal</KM>
        <KM evidence="4">0.53 mM for (E)-2-hexenal</KM>
        <text evidence="4">kcat is 0.27 sec(-1) for (E)-2-pentenal. kcat is 0.4 sec(-1) for (E)-2-hexenal.</text>
    </kinetics>
    <phDependence>
        <text evidence="3">Optimum pH is 9.0 for the forward reaction and 8.0 for the reverse reaction.</text>
    </phDependence>
</comment>
<comment type="subunit">
    <text evidence="1">Monomer.</text>
</comment>
<comment type="subcellular location">
    <subcellularLocation>
        <location evidence="4">Cytoplasm</location>
    </subcellularLocation>
</comment>
<comment type="alternative products">
    <event type="alternative splicing"/>
    <isoform>
        <id>Q9M2E2-1</id>
        <name>1</name>
        <sequence type="displayed"/>
    </isoform>
    <text>A number of isoforms are produced. According to EST sequences.</text>
</comment>
<comment type="induction">
    <text evidence="3">By pathogen infection. Not detected in healthy leaves.</text>
</comment>
<comment type="similarity">
    <text evidence="6">Belongs to the short-chain dehydrogenases/reductases (SDR) family.</text>
</comment>
<dbReference type="EC" id="1.1.1.-" evidence="4"/>
<dbReference type="EC" id="1.1.1.208" evidence="3"/>
<dbReference type="EMBL" id="AL137898">
    <property type="protein sequence ID" value="CAB71052.1"/>
    <property type="molecule type" value="Genomic_DNA"/>
</dbReference>
<dbReference type="EMBL" id="CP002686">
    <property type="protein sequence ID" value="AEE80174.1"/>
    <property type="molecule type" value="Genomic_DNA"/>
</dbReference>
<dbReference type="EMBL" id="AY045884">
    <property type="protein sequence ID" value="AAK76558.1"/>
    <property type="molecule type" value="mRNA"/>
</dbReference>
<dbReference type="EMBL" id="AY091305">
    <property type="protein sequence ID" value="AAM14244.1"/>
    <property type="molecule type" value="mRNA"/>
</dbReference>
<dbReference type="PIR" id="T47914">
    <property type="entry name" value="T47914"/>
</dbReference>
<dbReference type="RefSeq" id="NP_191681.1">
    <molecule id="Q9M2E2-1"/>
    <property type="nucleotide sequence ID" value="NM_115986.4"/>
</dbReference>
<dbReference type="SMR" id="Q9M2E2"/>
<dbReference type="BioGRID" id="10608">
    <property type="interactions" value="2"/>
</dbReference>
<dbReference type="FunCoup" id="Q9M2E2">
    <property type="interactions" value="169"/>
</dbReference>
<dbReference type="IntAct" id="Q9M2E2">
    <property type="interactions" value="1"/>
</dbReference>
<dbReference type="STRING" id="3702.Q9M2E2"/>
<dbReference type="PaxDb" id="3702-AT3G61220.2"/>
<dbReference type="ProteomicsDB" id="232781">
    <molecule id="Q9M2E2-1"/>
</dbReference>
<dbReference type="EnsemblPlants" id="AT3G61220.1">
    <molecule id="Q9M2E2-1"/>
    <property type="protein sequence ID" value="AT3G61220.1"/>
    <property type="gene ID" value="AT3G61220"/>
</dbReference>
<dbReference type="GeneID" id="825294"/>
<dbReference type="Gramene" id="AT3G61220.1">
    <molecule id="Q9M2E2-1"/>
    <property type="protein sequence ID" value="AT3G61220.1"/>
    <property type="gene ID" value="AT3G61220"/>
</dbReference>
<dbReference type="KEGG" id="ath:AT3G61220"/>
<dbReference type="Araport" id="AT3G61220"/>
<dbReference type="TAIR" id="AT3G61220">
    <property type="gene designation" value="SDR1"/>
</dbReference>
<dbReference type="eggNOG" id="KOG1208">
    <property type="taxonomic scope" value="Eukaryota"/>
</dbReference>
<dbReference type="HOGENOM" id="CLU_010194_9_0_1"/>
<dbReference type="InParanoid" id="Q9M2E2"/>
<dbReference type="OMA" id="KAFDIMN"/>
<dbReference type="PhylomeDB" id="Q9M2E2"/>
<dbReference type="BioCyc" id="ARA:AT3G61220-MONOMER"/>
<dbReference type="BioCyc" id="MetaCyc:AT3G61220-MONOMER"/>
<dbReference type="BRENDA" id="1.1.1.208">
    <property type="organism ID" value="399"/>
</dbReference>
<dbReference type="SABIO-RK" id="Q9M2E2"/>
<dbReference type="PRO" id="PR:Q9M2E2"/>
<dbReference type="Proteomes" id="UP000006548">
    <property type="component" value="Chromosome 3"/>
</dbReference>
<dbReference type="ExpressionAtlas" id="Q9M2E2">
    <property type="expression patterns" value="baseline and differential"/>
</dbReference>
<dbReference type="GO" id="GO:0005737">
    <property type="term" value="C:cytoplasm"/>
    <property type="evidence" value="ECO:0007669"/>
    <property type="project" value="UniProtKB-SubCell"/>
</dbReference>
<dbReference type="GO" id="GO:0047501">
    <property type="term" value="F:(+)-neomenthol dehydrogenase activity"/>
    <property type="evidence" value="ECO:0007669"/>
    <property type="project" value="UniProtKB-EC"/>
</dbReference>
<dbReference type="GO" id="GO:0006952">
    <property type="term" value="P:defense response"/>
    <property type="evidence" value="ECO:0007669"/>
    <property type="project" value="UniProtKB-KW"/>
</dbReference>
<dbReference type="CDD" id="cd05324">
    <property type="entry name" value="carb_red_PTCR-like_SDR_c"/>
    <property type="match status" value="1"/>
</dbReference>
<dbReference type="FunFam" id="3.40.50.720:FF:000312">
    <property type="entry name" value="(+)-neomenthol dehydrogenase"/>
    <property type="match status" value="1"/>
</dbReference>
<dbReference type="Gene3D" id="3.40.50.720">
    <property type="entry name" value="NAD(P)-binding Rossmann-like Domain"/>
    <property type="match status" value="1"/>
</dbReference>
<dbReference type="InterPro" id="IPR045313">
    <property type="entry name" value="CBR1-like"/>
</dbReference>
<dbReference type="InterPro" id="IPR036291">
    <property type="entry name" value="NAD(P)-bd_dom_sf"/>
</dbReference>
<dbReference type="InterPro" id="IPR002347">
    <property type="entry name" value="SDR_fam"/>
</dbReference>
<dbReference type="PANTHER" id="PTHR43490">
    <property type="entry name" value="(+)-NEOMENTHOL DEHYDROGENASE"/>
    <property type="match status" value="1"/>
</dbReference>
<dbReference type="PANTHER" id="PTHR43490:SF126">
    <property type="entry name" value="(+)-NEOMENTHOL DEHYDROGENASE-RELATED"/>
    <property type="match status" value="1"/>
</dbReference>
<dbReference type="Pfam" id="PF00106">
    <property type="entry name" value="adh_short"/>
    <property type="match status" value="1"/>
</dbReference>
<dbReference type="Pfam" id="PF13561">
    <property type="entry name" value="adh_short_C2"/>
    <property type="match status" value="1"/>
</dbReference>
<dbReference type="PRINTS" id="PR00081">
    <property type="entry name" value="GDHRDH"/>
</dbReference>
<dbReference type="PRINTS" id="PR00080">
    <property type="entry name" value="SDRFAMILY"/>
</dbReference>
<dbReference type="SUPFAM" id="SSF51735">
    <property type="entry name" value="NAD(P)-binding Rossmann-fold domains"/>
    <property type="match status" value="1"/>
</dbReference>
<protein>
    <recommendedName>
        <fullName evidence="5">(+)-neomenthol dehydrogenase</fullName>
        <ecNumber evidence="4">1.1.1.-</ecNumber>
        <ecNumber evidence="3">1.1.1.208</ecNumber>
    </recommendedName>
    <alternativeName>
        <fullName>Menthone:neomenthol reductase</fullName>
    </alternativeName>
    <alternativeName>
        <fullName>Short-chain dehydrogenase/reductase 1</fullName>
        <shortName>AtSDR1</shortName>
    </alternativeName>
</protein>
<feature type="chain" id="PRO_0000349098" description="(+)-neomenthol dehydrogenase">
    <location>
        <begin position="1"/>
        <end position="296"/>
    </location>
</feature>
<feature type="active site" description="Proton acceptor" evidence="2">
    <location>
        <position position="220"/>
    </location>
</feature>
<feature type="binding site" evidence="2">
    <location>
        <begin position="16"/>
        <end position="40"/>
    </location>
    <ligand>
        <name>NADP(+)</name>
        <dbReference type="ChEBI" id="CHEBI:58349"/>
    </ligand>
</feature>
<feature type="binding site" evidence="2">
    <location>
        <position position="164"/>
    </location>
    <ligand>
        <name>substrate</name>
    </ligand>
</feature>
<gene>
    <name type="primary">SDR1</name>
    <name evidence="7" type="ordered locus">At3g61220</name>
    <name evidence="8" type="ORF">T20K12.120</name>
</gene>
<reference key="1">
    <citation type="journal article" date="2000" name="Nature">
        <title>Sequence and analysis of chromosome 3 of the plant Arabidopsis thaliana.</title>
        <authorList>
            <person name="Salanoubat M."/>
            <person name="Lemcke K."/>
            <person name="Rieger M."/>
            <person name="Ansorge W."/>
            <person name="Unseld M."/>
            <person name="Fartmann B."/>
            <person name="Valle G."/>
            <person name="Bloecker H."/>
            <person name="Perez-Alonso M."/>
            <person name="Obermaier B."/>
            <person name="Delseny M."/>
            <person name="Boutry M."/>
            <person name="Grivell L.A."/>
            <person name="Mache R."/>
            <person name="Puigdomenech P."/>
            <person name="De Simone V."/>
            <person name="Choisne N."/>
            <person name="Artiguenave F."/>
            <person name="Robert C."/>
            <person name="Brottier P."/>
            <person name="Wincker P."/>
            <person name="Cattolico L."/>
            <person name="Weissenbach J."/>
            <person name="Saurin W."/>
            <person name="Quetier F."/>
            <person name="Schaefer M."/>
            <person name="Mueller-Auer S."/>
            <person name="Gabel C."/>
            <person name="Fuchs M."/>
            <person name="Benes V."/>
            <person name="Wurmbach E."/>
            <person name="Drzonek H."/>
            <person name="Erfle H."/>
            <person name="Jordan N."/>
            <person name="Bangert S."/>
            <person name="Wiedelmann R."/>
            <person name="Kranz H."/>
            <person name="Voss H."/>
            <person name="Holland R."/>
            <person name="Brandt P."/>
            <person name="Nyakatura G."/>
            <person name="Vezzi A."/>
            <person name="D'Angelo M."/>
            <person name="Pallavicini A."/>
            <person name="Toppo S."/>
            <person name="Simionati B."/>
            <person name="Conrad A."/>
            <person name="Hornischer K."/>
            <person name="Kauer G."/>
            <person name="Loehnert T.-H."/>
            <person name="Nordsiek G."/>
            <person name="Reichelt J."/>
            <person name="Scharfe M."/>
            <person name="Schoen O."/>
            <person name="Bargues M."/>
            <person name="Terol J."/>
            <person name="Climent J."/>
            <person name="Navarro P."/>
            <person name="Collado C."/>
            <person name="Perez-Perez A."/>
            <person name="Ottenwaelder B."/>
            <person name="Duchemin D."/>
            <person name="Cooke R."/>
            <person name="Laudie M."/>
            <person name="Berger-Llauro C."/>
            <person name="Purnelle B."/>
            <person name="Masuy D."/>
            <person name="de Haan M."/>
            <person name="Maarse A.C."/>
            <person name="Alcaraz J.-P."/>
            <person name="Cottet A."/>
            <person name="Casacuberta E."/>
            <person name="Monfort A."/>
            <person name="Argiriou A."/>
            <person name="Flores M."/>
            <person name="Liguori R."/>
            <person name="Vitale D."/>
            <person name="Mannhaupt G."/>
            <person name="Haase D."/>
            <person name="Schoof H."/>
            <person name="Rudd S."/>
            <person name="Zaccaria P."/>
            <person name="Mewes H.-W."/>
            <person name="Mayer K.F.X."/>
            <person name="Kaul S."/>
            <person name="Town C.D."/>
            <person name="Koo H.L."/>
            <person name="Tallon L.J."/>
            <person name="Jenkins J."/>
            <person name="Rooney T."/>
            <person name="Rizzo M."/>
            <person name="Walts A."/>
            <person name="Utterback T."/>
            <person name="Fujii C.Y."/>
            <person name="Shea T.P."/>
            <person name="Creasy T.H."/>
            <person name="Haas B."/>
            <person name="Maiti R."/>
            <person name="Wu D."/>
            <person name="Peterson J."/>
            <person name="Van Aken S."/>
            <person name="Pai G."/>
            <person name="Militscher J."/>
            <person name="Sellers P."/>
            <person name="Gill J.E."/>
            <person name="Feldblyum T.V."/>
            <person name="Preuss D."/>
            <person name="Lin X."/>
            <person name="Nierman W.C."/>
            <person name="Salzberg S.L."/>
            <person name="White O."/>
            <person name="Venter J.C."/>
            <person name="Fraser C.M."/>
            <person name="Kaneko T."/>
            <person name="Nakamura Y."/>
            <person name="Sato S."/>
            <person name="Kato T."/>
            <person name="Asamizu E."/>
            <person name="Sasamoto S."/>
            <person name="Kimura T."/>
            <person name="Idesawa K."/>
            <person name="Kawashima K."/>
            <person name="Kishida Y."/>
            <person name="Kiyokawa C."/>
            <person name="Kohara M."/>
            <person name="Matsumoto M."/>
            <person name="Matsuno A."/>
            <person name="Muraki A."/>
            <person name="Nakayama S."/>
            <person name="Nakazaki N."/>
            <person name="Shinpo S."/>
            <person name="Takeuchi C."/>
            <person name="Wada T."/>
            <person name="Watanabe A."/>
            <person name="Yamada M."/>
            <person name="Yasuda M."/>
            <person name="Tabata S."/>
        </authorList>
    </citation>
    <scope>NUCLEOTIDE SEQUENCE [LARGE SCALE GENOMIC DNA]</scope>
    <source>
        <strain>cv. Columbia</strain>
    </source>
</reference>
<reference key="2">
    <citation type="journal article" date="2017" name="Plant J.">
        <title>Araport11: a complete reannotation of the Arabidopsis thaliana reference genome.</title>
        <authorList>
            <person name="Cheng C.Y."/>
            <person name="Krishnakumar V."/>
            <person name="Chan A.P."/>
            <person name="Thibaud-Nissen F."/>
            <person name="Schobel S."/>
            <person name="Town C.D."/>
        </authorList>
    </citation>
    <scope>GENOME REANNOTATION</scope>
    <source>
        <strain>cv. Columbia</strain>
    </source>
</reference>
<reference key="3">
    <citation type="journal article" date="2003" name="Science">
        <title>Empirical analysis of transcriptional activity in the Arabidopsis genome.</title>
        <authorList>
            <person name="Yamada K."/>
            <person name="Lim J."/>
            <person name="Dale J.M."/>
            <person name="Chen H."/>
            <person name="Shinn P."/>
            <person name="Palm C.J."/>
            <person name="Southwick A.M."/>
            <person name="Wu H.C."/>
            <person name="Kim C.J."/>
            <person name="Nguyen M."/>
            <person name="Pham P.K."/>
            <person name="Cheuk R.F."/>
            <person name="Karlin-Newmann G."/>
            <person name="Liu S.X."/>
            <person name="Lam B."/>
            <person name="Sakano H."/>
            <person name="Wu T."/>
            <person name="Yu G."/>
            <person name="Miranda M."/>
            <person name="Quach H.L."/>
            <person name="Tripp M."/>
            <person name="Chang C.H."/>
            <person name="Lee J.M."/>
            <person name="Toriumi M.J."/>
            <person name="Chan M.M."/>
            <person name="Tang C.C."/>
            <person name="Onodera C.S."/>
            <person name="Deng J.M."/>
            <person name="Akiyama K."/>
            <person name="Ansari Y."/>
            <person name="Arakawa T."/>
            <person name="Banh J."/>
            <person name="Banno F."/>
            <person name="Bowser L."/>
            <person name="Brooks S.Y."/>
            <person name="Carninci P."/>
            <person name="Chao Q."/>
            <person name="Choy N."/>
            <person name="Enju A."/>
            <person name="Goldsmith A.D."/>
            <person name="Gurjal M."/>
            <person name="Hansen N.F."/>
            <person name="Hayashizaki Y."/>
            <person name="Johnson-Hopson C."/>
            <person name="Hsuan V.W."/>
            <person name="Iida K."/>
            <person name="Karnes M."/>
            <person name="Khan S."/>
            <person name="Koesema E."/>
            <person name="Ishida J."/>
            <person name="Jiang P.X."/>
            <person name="Jones T."/>
            <person name="Kawai J."/>
            <person name="Kamiya A."/>
            <person name="Meyers C."/>
            <person name="Nakajima M."/>
            <person name="Narusaka M."/>
            <person name="Seki M."/>
            <person name="Sakurai T."/>
            <person name="Satou M."/>
            <person name="Tamse R."/>
            <person name="Vaysberg M."/>
            <person name="Wallender E.K."/>
            <person name="Wong C."/>
            <person name="Yamamura Y."/>
            <person name="Yuan S."/>
            <person name="Shinozaki K."/>
            <person name="Davis R.W."/>
            <person name="Theologis A."/>
            <person name="Ecker J.R."/>
        </authorList>
    </citation>
    <scope>NUCLEOTIDE SEQUENCE [LARGE SCALE MRNA]</scope>
    <source>
        <strain>cv. Columbia</strain>
    </source>
</reference>
<reference key="4">
    <citation type="journal article" date="2008" name="Plant Physiol.">
        <title>A role for a menthone reductase in resistance against microbial pathogens in plants.</title>
        <authorList>
            <person name="Choi H.W."/>
            <person name="Lee B.G."/>
            <person name="Kim N.H."/>
            <person name="Park Y."/>
            <person name="Lim C.W."/>
            <person name="Song H.K."/>
            <person name="Hwang B.K."/>
        </authorList>
    </citation>
    <scope>FUNCTION</scope>
    <scope>CATALYTIC ACTIVITY</scope>
    <scope>BIOPHYSICOCHEMICAL PROPERTIES</scope>
    <scope>INDUCTION</scope>
</reference>
<reference key="5">
    <citation type="journal article" date="2011" name="J. Biol. Chem.">
        <title>NADPH-dependent reductases involved in the detoxification of reactive carbonyls in plants.</title>
        <authorList>
            <person name="Yamauchi Y."/>
            <person name="Hasegawa A."/>
            <person name="Taninaka A."/>
            <person name="Mizutani M."/>
            <person name="Sugimoto Y."/>
        </authorList>
    </citation>
    <scope>FUNCTION</scope>
    <scope>SUBCELLULAR LOCATION</scope>
    <scope>BIOPHYSICOCHEMICAL PROPERTIES</scope>
</reference>
<evidence type="ECO:0000250" key="1"/>
<evidence type="ECO:0000250" key="2">
    <source>
        <dbReference type="UniProtKB" id="Q12634"/>
    </source>
</evidence>
<evidence type="ECO:0000269" key="3">
    <source>
    </source>
</evidence>
<evidence type="ECO:0000269" key="4">
    <source>
    </source>
</evidence>
<evidence type="ECO:0000303" key="5">
    <source>
    </source>
</evidence>
<evidence type="ECO:0000305" key="6"/>
<evidence type="ECO:0000312" key="7">
    <source>
        <dbReference type="Araport" id="AT3G61220"/>
    </source>
</evidence>
<evidence type="ECO:0000312" key="8">
    <source>
        <dbReference type="EMBL" id="CAB71052.1"/>
    </source>
</evidence>
<sequence>MAEETPRYAVVTGANRGIGFEICRQLASEGIRVVLTSRDENRGLEAVETLKKELEISDQSLLFHQLDVADPASITSLAEFVKTQFGKLDILVNNAGIGGIITDAEALRAGAGKEGFKWDEIITETYELTEECIKINYYGPKRMCEAFIPLLKLSDSPRIVNVSSSMGQLKNVLNEWAKGILSDAENLTEERIDQVINQLLNDFKEGTVKEKNWAKFMSAYVVSKASLNGYTRVLAKKHPEFRVNAVCPGFVKTDMNFKTGVLSVEEGASSPVRLALLPHQETPSGCFFSRKQVSEF</sequence>
<accession>Q9M2E2</accession>
<organism>
    <name type="scientific">Arabidopsis thaliana</name>
    <name type="common">Mouse-ear cress</name>
    <dbReference type="NCBI Taxonomy" id="3702"/>
    <lineage>
        <taxon>Eukaryota</taxon>
        <taxon>Viridiplantae</taxon>
        <taxon>Streptophyta</taxon>
        <taxon>Embryophyta</taxon>
        <taxon>Tracheophyta</taxon>
        <taxon>Spermatophyta</taxon>
        <taxon>Magnoliopsida</taxon>
        <taxon>eudicotyledons</taxon>
        <taxon>Gunneridae</taxon>
        <taxon>Pentapetalae</taxon>
        <taxon>rosids</taxon>
        <taxon>malvids</taxon>
        <taxon>Brassicales</taxon>
        <taxon>Brassicaceae</taxon>
        <taxon>Camelineae</taxon>
        <taxon>Arabidopsis</taxon>
    </lineage>
</organism>
<keyword id="KW-0025">Alternative splicing</keyword>
<keyword id="KW-0963">Cytoplasm</keyword>
<keyword id="KW-0521">NADP</keyword>
<keyword id="KW-0560">Oxidoreductase</keyword>
<keyword id="KW-0611">Plant defense</keyword>
<keyword id="KW-1185">Reference proteome</keyword>
<name>SDR1_ARATH</name>